<accession>B5R0L7</accession>
<keyword id="KW-0687">Ribonucleoprotein</keyword>
<keyword id="KW-0689">Ribosomal protein</keyword>
<protein>
    <recommendedName>
        <fullName evidence="1">Small ribosomal subunit protein uS9</fullName>
    </recommendedName>
    <alternativeName>
        <fullName evidence="2">30S ribosomal protein S9</fullName>
    </alternativeName>
</protein>
<sequence length="130" mass="14826">MAENQYYGTGRRKSSAARVFIKPGNGKIVINQRSLEQYFGRETARMVVRQPLELVDMVEKLDLYITVKGGGISGQAGAIRHGITRALMEYDESLRGELRKAGFVTRDARQVERKKVGLRKARRRPQFSKR</sequence>
<evidence type="ECO:0000255" key="1">
    <source>
        <dbReference type="HAMAP-Rule" id="MF_00532"/>
    </source>
</evidence>
<evidence type="ECO:0000305" key="2"/>
<comment type="similarity">
    <text evidence="1">Belongs to the universal ribosomal protein uS9 family.</text>
</comment>
<dbReference type="EMBL" id="AM933172">
    <property type="protein sequence ID" value="CAR34753.1"/>
    <property type="molecule type" value="Genomic_DNA"/>
</dbReference>
<dbReference type="RefSeq" id="WP_000829815.1">
    <property type="nucleotide sequence ID" value="NC_011294.1"/>
</dbReference>
<dbReference type="SMR" id="B5R0L7"/>
<dbReference type="GeneID" id="97393262"/>
<dbReference type="KEGG" id="set:SEN3177"/>
<dbReference type="HOGENOM" id="CLU_046483_2_1_6"/>
<dbReference type="Proteomes" id="UP000000613">
    <property type="component" value="Chromosome"/>
</dbReference>
<dbReference type="GO" id="GO:0022627">
    <property type="term" value="C:cytosolic small ribosomal subunit"/>
    <property type="evidence" value="ECO:0007669"/>
    <property type="project" value="TreeGrafter"/>
</dbReference>
<dbReference type="GO" id="GO:0003723">
    <property type="term" value="F:RNA binding"/>
    <property type="evidence" value="ECO:0007669"/>
    <property type="project" value="TreeGrafter"/>
</dbReference>
<dbReference type="GO" id="GO:0003735">
    <property type="term" value="F:structural constituent of ribosome"/>
    <property type="evidence" value="ECO:0007669"/>
    <property type="project" value="InterPro"/>
</dbReference>
<dbReference type="GO" id="GO:0006412">
    <property type="term" value="P:translation"/>
    <property type="evidence" value="ECO:0007669"/>
    <property type="project" value="UniProtKB-UniRule"/>
</dbReference>
<dbReference type="FunFam" id="3.30.230.10:FF:000001">
    <property type="entry name" value="30S ribosomal protein S9"/>
    <property type="match status" value="1"/>
</dbReference>
<dbReference type="Gene3D" id="3.30.230.10">
    <property type="match status" value="1"/>
</dbReference>
<dbReference type="HAMAP" id="MF_00532_B">
    <property type="entry name" value="Ribosomal_uS9_B"/>
    <property type="match status" value="1"/>
</dbReference>
<dbReference type="InterPro" id="IPR020568">
    <property type="entry name" value="Ribosomal_Su5_D2-typ_SF"/>
</dbReference>
<dbReference type="InterPro" id="IPR000754">
    <property type="entry name" value="Ribosomal_uS9"/>
</dbReference>
<dbReference type="InterPro" id="IPR023035">
    <property type="entry name" value="Ribosomal_uS9_bac/plastid"/>
</dbReference>
<dbReference type="InterPro" id="IPR020574">
    <property type="entry name" value="Ribosomal_uS9_CS"/>
</dbReference>
<dbReference type="InterPro" id="IPR014721">
    <property type="entry name" value="Ribsml_uS5_D2-typ_fold_subgr"/>
</dbReference>
<dbReference type="NCBIfam" id="NF001099">
    <property type="entry name" value="PRK00132.1"/>
    <property type="match status" value="1"/>
</dbReference>
<dbReference type="PANTHER" id="PTHR21569">
    <property type="entry name" value="RIBOSOMAL PROTEIN S9"/>
    <property type="match status" value="1"/>
</dbReference>
<dbReference type="PANTHER" id="PTHR21569:SF1">
    <property type="entry name" value="SMALL RIBOSOMAL SUBUNIT PROTEIN US9M"/>
    <property type="match status" value="1"/>
</dbReference>
<dbReference type="Pfam" id="PF00380">
    <property type="entry name" value="Ribosomal_S9"/>
    <property type="match status" value="1"/>
</dbReference>
<dbReference type="SUPFAM" id="SSF54211">
    <property type="entry name" value="Ribosomal protein S5 domain 2-like"/>
    <property type="match status" value="1"/>
</dbReference>
<dbReference type="PROSITE" id="PS00360">
    <property type="entry name" value="RIBOSOMAL_S9"/>
    <property type="match status" value="1"/>
</dbReference>
<proteinExistence type="inferred from homology"/>
<gene>
    <name evidence="1" type="primary">rpsI</name>
    <name type="ordered locus">SEN3177</name>
</gene>
<reference key="1">
    <citation type="journal article" date="2008" name="Genome Res.">
        <title>Comparative genome analysis of Salmonella enteritidis PT4 and Salmonella gallinarum 287/91 provides insights into evolutionary and host adaptation pathways.</title>
        <authorList>
            <person name="Thomson N.R."/>
            <person name="Clayton D.J."/>
            <person name="Windhorst D."/>
            <person name="Vernikos G."/>
            <person name="Davidson S."/>
            <person name="Churcher C."/>
            <person name="Quail M.A."/>
            <person name="Stevens M."/>
            <person name="Jones M.A."/>
            <person name="Watson M."/>
            <person name="Barron A."/>
            <person name="Layton A."/>
            <person name="Pickard D."/>
            <person name="Kingsley R.A."/>
            <person name="Bignell A."/>
            <person name="Clark L."/>
            <person name="Harris B."/>
            <person name="Ormond D."/>
            <person name="Abdellah Z."/>
            <person name="Brooks K."/>
            <person name="Cherevach I."/>
            <person name="Chillingworth T."/>
            <person name="Woodward J."/>
            <person name="Norberczak H."/>
            <person name="Lord A."/>
            <person name="Arrowsmith C."/>
            <person name="Jagels K."/>
            <person name="Moule S."/>
            <person name="Mungall K."/>
            <person name="Saunders M."/>
            <person name="Whitehead S."/>
            <person name="Chabalgoity J.A."/>
            <person name="Maskell D."/>
            <person name="Humphreys T."/>
            <person name="Roberts M."/>
            <person name="Barrow P.A."/>
            <person name="Dougan G."/>
            <person name="Parkhill J."/>
        </authorList>
    </citation>
    <scope>NUCLEOTIDE SEQUENCE [LARGE SCALE GENOMIC DNA]</scope>
    <source>
        <strain>P125109</strain>
    </source>
</reference>
<name>RS9_SALEP</name>
<feature type="chain" id="PRO_1000128169" description="Small ribosomal subunit protein uS9">
    <location>
        <begin position="1"/>
        <end position="130"/>
    </location>
</feature>
<organism>
    <name type="scientific">Salmonella enteritidis PT4 (strain P125109)</name>
    <dbReference type="NCBI Taxonomy" id="550537"/>
    <lineage>
        <taxon>Bacteria</taxon>
        <taxon>Pseudomonadati</taxon>
        <taxon>Pseudomonadota</taxon>
        <taxon>Gammaproteobacteria</taxon>
        <taxon>Enterobacterales</taxon>
        <taxon>Enterobacteriaceae</taxon>
        <taxon>Salmonella</taxon>
    </lineage>
</organism>